<comment type="function">
    <text evidence="4">Acts as a molecular chaperone for pcsk2, preventing its premature activation in the regulated secretory pathway. Binds to inactive pcsk2 in the endoplasmic reticulum and facilitates its transport from there to later compartments of the secretory pathway where it is proteolytically matured and activated. Also required for cleavage of pcsk2 but does not appear to be involved in its folding.</text>
</comment>
<comment type="subunit">
    <text evidence="3">Interacts with pcsk2 early in the secretory pathway. Dissociation occurs at later stages.</text>
</comment>
<comment type="subcellular location">
    <subcellularLocation>
        <location evidence="6">Secreted</location>
    </subcellularLocation>
    <text evidence="2">Neuroendocrine and endocrine secretory granules.</text>
</comment>
<comment type="PTM">
    <text evidence="4">Proteolytically cleaved in the Golgi by a furin-like convertase to generate bioactive peptides.</text>
</comment>
<comment type="PTM">
    <text evidence="4">Sulfated on tyrosine residues.</text>
</comment>
<comment type="similarity">
    <text evidence="8">Belongs to the 7B2 family.</text>
</comment>
<organism>
    <name type="scientific">Xenopus laevis</name>
    <name type="common">African clawed frog</name>
    <dbReference type="NCBI Taxonomy" id="8355"/>
    <lineage>
        <taxon>Eukaryota</taxon>
        <taxon>Metazoa</taxon>
        <taxon>Chordata</taxon>
        <taxon>Craniata</taxon>
        <taxon>Vertebrata</taxon>
        <taxon>Euteleostomi</taxon>
        <taxon>Amphibia</taxon>
        <taxon>Batrachia</taxon>
        <taxon>Anura</taxon>
        <taxon>Pipoidea</taxon>
        <taxon>Pipidae</taxon>
        <taxon>Xenopodinae</taxon>
        <taxon>Xenopus</taxon>
        <taxon>Xenopus</taxon>
    </lineage>
</organism>
<sequence length="208" mass="23021">MGMYSAIPLALPMVLLMVYGLTPSLGHSPRTPDRVSEADIQRLLHGVMEELGIARPRVEYPAHQAMNLVGPQSIEGGAHEGLQHLGPYGNIPNIVAELTGDNIPKDFREDQGYPNPPNPCPVGKTGDGCLEDTPDTAQFSREYQLHQNLYDPEHNYPGASTWNKKLLYEKIKGASQRQKRTVNPYLQGQKLDKVVAKKSVPHFSGEEE</sequence>
<accession>P18844</accession>
<accession>A0A1L8FAT1</accession>
<proteinExistence type="evidence at protein level"/>
<gene>
    <name type="primary">scg5.L</name>
    <name type="synonym">sgne1</name>
</gene>
<reference key="1">
    <citation type="journal article" date="2016" name="Nature">
        <title>Genome evolution in the allotetraploid frog Xenopus laevis.</title>
        <authorList>
            <person name="Session A.M."/>
            <person name="Uno Y."/>
            <person name="Kwon T."/>
            <person name="Chapman J.A."/>
            <person name="Toyoda A."/>
            <person name="Takahashi S."/>
            <person name="Fukui A."/>
            <person name="Hikosaka A."/>
            <person name="Suzuki A."/>
            <person name="Kondo M."/>
            <person name="van Heeringen S.J."/>
            <person name="Quigley I."/>
            <person name="Heinz S."/>
            <person name="Ogino H."/>
            <person name="Ochi H."/>
            <person name="Hellsten U."/>
            <person name="Lyons J.B."/>
            <person name="Simakov O."/>
            <person name="Putnam N."/>
            <person name="Stites J."/>
            <person name="Kuroki Y."/>
            <person name="Tanaka T."/>
            <person name="Michiue T."/>
            <person name="Watanabe M."/>
            <person name="Bogdanovic O."/>
            <person name="Lister R."/>
            <person name="Georgiou G."/>
            <person name="Paranjpe S.S."/>
            <person name="van Kruijsbergen I."/>
            <person name="Shu S."/>
            <person name="Carlson J."/>
            <person name="Kinoshita T."/>
            <person name="Ohta Y."/>
            <person name="Mawaribuchi S."/>
            <person name="Jenkins J."/>
            <person name="Grimwood J."/>
            <person name="Schmutz J."/>
            <person name="Mitros T."/>
            <person name="Mozaffari S.V."/>
            <person name="Suzuki Y."/>
            <person name="Haramoto Y."/>
            <person name="Yamamoto T.S."/>
            <person name="Takagi C."/>
            <person name="Heald R."/>
            <person name="Miller K."/>
            <person name="Haudenschild C."/>
            <person name="Kitzman J."/>
            <person name="Nakayama T."/>
            <person name="Izutsu Y."/>
            <person name="Robert J."/>
            <person name="Fortriede J."/>
            <person name="Burns K."/>
            <person name="Lotay V."/>
            <person name="Karimi K."/>
            <person name="Yasuoka Y."/>
            <person name="Dichmann D.S."/>
            <person name="Flajnik M.F."/>
            <person name="Houston D.W."/>
            <person name="Shendure J."/>
            <person name="DuPasquier L."/>
            <person name="Vize P.D."/>
            <person name="Zorn A.M."/>
            <person name="Ito M."/>
            <person name="Marcotte E.M."/>
            <person name="Wallingford J.B."/>
            <person name="Ito Y."/>
            <person name="Asashima M."/>
            <person name="Ueno N."/>
            <person name="Matsuda Y."/>
            <person name="Veenstra G.J."/>
            <person name="Fujiyama A."/>
            <person name="Harland R.M."/>
            <person name="Taira M."/>
            <person name="Rokhsar D.S."/>
        </authorList>
    </citation>
    <scope>NUCLEOTIDE SEQUENCE [LARGE SCALE GENOMIC DNA]</scope>
</reference>
<reference key="2">
    <citation type="journal article" date="1989" name="Eur. J. Biochem.">
        <title>The novel pituitary polypeptide 7B2 is a highly-conserved protein coexpressed with proopiomelanocortin.</title>
        <authorList>
            <person name="Martens G.J.M."/>
            <person name="Bussemakers M.J.G."/>
            <person name="Ayoubi T.A.Y."/>
            <person name="Jenks B.G."/>
        </authorList>
    </citation>
    <scope>NUCLEOTIDE SEQUENCE [MRNA] OF 48-208</scope>
</reference>
<reference key="3">
    <citation type="journal article" date="1990" name="J. Biol. Chem.">
        <title>The neuroendocrine polypeptide 7B2 is a precursor protein.</title>
        <authorList>
            <person name="Ayoubi T.A.Y."/>
            <person name="van Duijnhoven H.L.P."/>
            <person name="van de Ven W.J.M."/>
            <person name="Jenks B.G."/>
            <person name="Roubos E.W."/>
            <person name="Martens G.J.M."/>
        </authorList>
    </citation>
    <scope>SUBCELLULAR LOCATION</scope>
    <scope>PROTEOLYTIC PROCESSING</scope>
</reference>
<reference key="4">
    <citation type="journal article" date="1998" name="J. Neurochem.">
        <title>Manipulation of disulfide bonds differentially affects the intracellular transport, sorting, and processing of neuroendocrine secretory proteins.</title>
        <authorList>
            <person name="Van Horssen A.M."/>
            <person name="Van Kuppeveld F.J.M."/>
            <person name="Martens G.J.M."/>
        </authorList>
    </citation>
    <scope>DISULFIDE BOND</scope>
</reference>
<reference key="5">
    <citation type="journal article" date="2001" name="Biochem. J.">
        <title>Neuroendocrine secretory protein 7B2: structure, expression and functions.</title>
        <authorList>
            <person name="Mbikay M."/>
            <person name="Seidah N.G."/>
            <person name="Chretien M."/>
        </authorList>
    </citation>
    <scope>REVIEW</scope>
</reference>
<name>7B2_XENLA</name>
<protein>
    <recommendedName>
        <fullName>Neuroendocrine protein 7B2</fullName>
    </recommendedName>
    <alternativeName>
        <fullName>Secretogranin V</fullName>
    </alternativeName>
    <component>
        <recommendedName>
            <fullName>N-terminal peptide</fullName>
        </recommendedName>
    </component>
    <component>
        <recommendedName>
            <fullName>C-terminal peptide</fullName>
        </recommendedName>
    </component>
</protein>
<dbReference type="EMBL" id="X15608">
    <property type="protein sequence ID" value="CAA33631.1"/>
    <property type="molecule type" value="mRNA"/>
</dbReference>
<dbReference type="PIR" id="S03938">
    <property type="entry name" value="S03938"/>
</dbReference>
<dbReference type="RefSeq" id="XP_018086659.1">
    <property type="nucleotide sequence ID" value="XM_018231170.2"/>
</dbReference>
<dbReference type="STRING" id="8355.A0A1L8FAT1"/>
<dbReference type="MEROPS" id="I21.001"/>
<dbReference type="PaxDb" id="8355-A0A1L8FAT1"/>
<dbReference type="GeneID" id="397865"/>
<dbReference type="KEGG" id="xla:397865"/>
<dbReference type="AGR" id="Xenbase:XB-GENE-17341422"/>
<dbReference type="CTD" id="397865"/>
<dbReference type="Xenbase" id="XB-GENE-17341422">
    <property type="gene designation" value="scg5.L"/>
</dbReference>
<dbReference type="OMA" id="LGKWNKN"/>
<dbReference type="OrthoDB" id="9922675at2759"/>
<dbReference type="Proteomes" id="UP000186698">
    <property type="component" value="Chromosome 8L"/>
</dbReference>
<dbReference type="Bgee" id="397865">
    <property type="expression patterns" value="Expressed in brain and 15 other cell types or tissues"/>
</dbReference>
<dbReference type="GO" id="GO:0005576">
    <property type="term" value="C:extracellular region"/>
    <property type="evidence" value="ECO:0007669"/>
    <property type="project" value="UniProtKB-SubCell"/>
</dbReference>
<dbReference type="GO" id="GO:0030141">
    <property type="term" value="C:secretory granule"/>
    <property type="evidence" value="ECO:0000250"/>
    <property type="project" value="UniProtKB"/>
</dbReference>
<dbReference type="GO" id="GO:0004857">
    <property type="term" value="F:enzyme inhibitor activity"/>
    <property type="evidence" value="ECO:0000250"/>
    <property type="project" value="UniProtKB"/>
</dbReference>
<dbReference type="GO" id="GO:0030234">
    <property type="term" value="F:enzyme regulator activity"/>
    <property type="evidence" value="ECO:0000318"/>
    <property type="project" value="GO_Central"/>
</dbReference>
<dbReference type="GO" id="GO:0051082">
    <property type="term" value="F:unfolded protein binding"/>
    <property type="evidence" value="ECO:0000250"/>
    <property type="project" value="UniProtKB"/>
</dbReference>
<dbReference type="GO" id="GO:0006886">
    <property type="term" value="P:intracellular protein transport"/>
    <property type="evidence" value="ECO:0000250"/>
    <property type="project" value="UniProtKB"/>
</dbReference>
<dbReference type="GO" id="GO:0007218">
    <property type="term" value="P:neuropeptide signaling pathway"/>
    <property type="evidence" value="ECO:0007669"/>
    <property type="project" value="UniProtKB-KW"/>
</dbReference>
<dbReference type="GO" id="GO:0016486">
    <property type="term" value="P:peptide hormone processing"/>
    <property type="evidence" value="ECO:0000250"/>
    <property type="project" value="UniProtKB"/>
</dbReference>
<dbReference type="GO" id="GO:0046883">
    <property type="term" value="P:regulation of hormone secretion"/>
    <property type="evidence" value="ECO:0000250"/>
    <property type="project" value="UniProtKB"/>
</dbReference>
<dbReference type="InterPro" id="IPR007945">
    <property type="entry name" value="Secretogranin_V"/>
</dbReference>
<dbReference type="PANTHER" id="PTHR12738">
    <property type="entry name" value="NEUROENDOCRINE PROTEIN 7B2"/>
    <property type="match status" value="1"/>
</dbReference>
<dbReference type="PANTHER" id="PTHR12738:SF0">
    <property type="entry name" value="NEUROENDOCRINE PROTEIN 7B2"/>
    <property type="match status" value="1"/>
</dbReference>
<dbReference type="Pfam" id="PF05281">
    <property type="entry name" value="Secretogranin_V"/>
    <property type="match status" value="1"/>
</dbReference>
<feature type="signal peptide" evidence="5">
    <location>
        <begin position="1"/>
        <end position="26"/>
    </location>
</feature>
<feature type="chain" id="PRO_0000045862" description="Neuroendocrine protein 7B2">
    <location>
        <begin position="27"/>
        <end position="208"/>
    </location>
</feature>
<feature type="chain" id="PRO_0000000053" description="N-terminal peptide" evidence="2">
    <location>
        <begin position="27"/>
        <end position="175"/>
    </location>
</feature>
<feature type="peptide" id="PRO_0000000054" description="C-terminal peptide" evidence="6">
    <location>
        <begin position="199"/>
        <end position="208"/>
    </location>
</feature>
<feature type="modified residue" description="Phosphoserine" evidence="1">
    <location>
        <position position="204"/>
    </location>
</feature>
<feature type="disulfide bond" evidence="7">
    <location>
        <begin position="120"/>
        <end position="129"/>
    </location>
</feature>
<keyword id="KW-0143">Chaperone</keyword>
<keyword id="KW-0165">Cleavage on pair of basic residues</keyword>
<keyword id="KW-1015">Disulfide bond</keyword>
<keyword id="KW-0527">Neuropeptide</keyword>
<keyword id="KW-0597">Phosphoprotein</keyword>
<keyword id="KW-1185">Reference proteome</keyword>
<keyword id="KW-0964">Secreted</keyword>
<keyword id="KW-0732">Signal</keyword>
<keyword id="KW-0765">Sulfation</keyword>
<keyword id="KW-0813">Transport</keyword>
<evidence type="ECO:0000250" key="1"/>
<evidence type="ECO:0000250" key="2">
    <source>
        <dbReference type="UniProtKB" id="P01165"/>
    </source>
</evidence>
<evidence type="ECO:0000250" key="3">
    <source>
        <dbReference type="UniProtKB" id="P05408"/>
    </source>
</evidence>
<evidence type="ECO:0000250" key="4">
    <source>
        <dbReference type="UniProtKB" id="P12961"/>
    </source>
</evidence>
<evidence type="ECO:0000255" key="5"/>
<evidence type="ECO:0000269" key="6">
    <source>
    </source>
</evidence>
<evidence type="ECO:0000269" key="7">
    <source>
    </source>
</evidence>
<evidence type="ECO:0000305" key="8"/>